<name>RS10_FRATO</name>
<protein>
    <recommendedName>
        <fullName evidence="1">Small ribosomal subunit protein uS10</fullName>
    </recommendedName>
    <alternativeName>
        <fullName evidence="2">30S ribosomal protein S10</fullName>
    </alternativeName>
</protein>
<keyword id="KW-0687">Ribonucleoprotein</keyword>
<keyword id="KW-0689">Ribosomal protein</keyword>
<accession>Q0BNS8</accession>
<reference key="1">
    <citation type="journal article" date="2006" name="J. Bacteriol.">
        <title>Chromosome rearrangement and diversification of Francisella tularensis revealed by the type B (OSU18) genome sequence.</title>
        <authorList>
            <person name="Petrosino J.F."/>
            <person name="Xiang Q."/>
            <person name="Karpathy S.E."/>
            <person name="Jiang H."/>
            <person name="Yerrapragada S."/>
            <person name="Liu Y."/>
            <person name="Gioia J."/>
            <person name="Hemphill L."/>
            <person name="Gonzalez A."/>
            <person name="Raghavan T.M."/>
            <person name="Uzman A."/>
            <person name="Fox G.E."/>
            <person name="Highlander S."/>
            <person name="Reichard M."/>
            <person name="Morton R.J."/>
            <person name="Clinkenbeard K.D."/>
            <person name="Weinstock G.M."/>
        </authorList>
    </citation>
    <scope>NUCLEOTIDE SEQUENCE [LARGE SCALE GENOMIC DNA]</scope>
    <source>
        <strain>OSU18</strain>
    </source>
</reference>
<organism>
    <name type="scientific">Francisella tularensis subsp. holarctica (strain OSU18)</name>
    <dbReference type="NCBI Taxonomy" id="393011"/>
    <lineage>
        <taxon>Bacteria</taxon>
        <taxon>Pseudomonadati</taxon>
        <taxon>Pseudomonadota</taxon>
        <taxon>Gammaproteobacteria</taxon>
        <taxon>Thiotrichales</taxon>
        <taxon>Francisellaceae</taxon>
        <taxon>Francisella</taxon>
    </lineage>
</organism>
<comment type="function">
    <text evidence="1">Involved in the binding of tRNA to the ribosomes.</text>
</comment>
<comment type="subunit">
    <text evidence="1">Part of the 30S ribosomal subunit.</text>
</comment>
<comment type="similarity">
    <text evidence="1">Belongs to the universal ribosomal protein uS10 family.</text>
</comment>
<gene>
    <name evidence="1" type="primary">rpsJ</name>
    <name type="ordered locus">FTH_0230</name>
</gene>
<feature type="chain" id="PRO_1000015025" description="Small ribosomal subunit protein uS10">
    <location>
        <begin position="1"/>
        <end position="105"/>
    </location>
</feature>
<proteinExistence type="inferred from homology"/>
<evidence type="ECO:0000255" key="1">
    <source>
        <dbReference type="HAMAP-Rule" id="MF_00508"/>
    </source>
</evidence>
<evidence type="ECO:0000305" key="2"/>
<dbReference type="EMBL" id="CP000437">
    <property type="protein sequence ID" value="ABI82256.1"/>
    <property type="molecule type" value="Genomic_DNA"/>
</dbReference>
<dbReference type="SMR" id="Q0BNS8"/>
<dbReference type="KEGG" id="fth:FTH_0230"/>
<dbReference type="GO" id="GO:1990904">
    <property type="term" value="C:ribonucleoprotein complex"/>
    <property type="evidence" value="ECO:0007669"/>
    <property type="project" value="UniProtKB-KW"/>
</dbReference>
<dbReference type="GO" id="GO:0005840">
    <property type="term" value="C:ribosome"/>
    <property type="evidence" value="ECO:0007669"/>
    <property type="project" value="UniProtKB-KW"/>
</dbReference>
<dbReference type="GO" id="GO:0003735">
    <property type="term" value="F:structural constituent of ribosome"/>
    <property type="evidence" value="ECO:0007669"/>
    <property type="project" value="InterPro"/>
</dbReference>
<dbReference type="GO" id="GO:0000049">
    <property type="term" value="F:tRNA binding"/>
    <property type="evidence" value="ECO:0007669"/>
    <property type="project" value="UniProtKB-UniRule"/>
</dbReference>
<dbReference type="GO" id="GO:0006412">
    <property type="term" value="P:translation"/>
    <property type="evidence" value="ECO:0007669"/>
    <property type="project" value="UniProtKB-UniRule"/>
</dbReference>
<dbReference type="FunFam" id="3.30.70.600:FF:000001">
    <property type="entry name" value="30S ribosomal protein S10"/>
    <property type="match status" value="1"/>
</dbReference>
<dbReference type="Gene3D" id="3.30.70.600">
    <property type="entry name" value="Ribosomal protein S10 domain"/>
    <property type="match status" value="1"/>
</dbReference>
<dbReference type="HAMAP" id="MF_00508">
    <property type="entry name" value="Ribosomal_uS10"/>
    <property type="match status" value="1"/>
</dbReference>
<dbReference type="InterPro" id="IPR001848">
    <property type="entry name" value="Ribosomal_uS10"/>
</dbReference>
<dbReference type="InterPro" id="IPR027486">
    <property type="entry name" value="Ribosomal_uS10_dom"/>
</dbReference>
<dbReference type="InterPro" id="IPR036838">
    <property type="entry name" value="Ribosomal_uS10_dom_sf"/>
</dbReference>
<dbReference type="NCBIfam" id="NF001861">
    <property type="entry name" value="PRK00596.1"/>
    <property type="match status" value="1"/>
</dbReference>
<dbReference type="NCBIfam" id="TIGR01049">
    <property type="entry name" value="rpsJ_bact"/>
    <property type="match status" value="1"/>
</dbReference>
<dbReference type="PANTHER" id="PTHR11700">
    <property type="entry name" value="30S RIBOSOMAL PROTEIN S10 FAMILY MEMBER"/>
    <property type="match status" value="1"/>
</dbReference>
<dbReference type="Pfam" id="PF00338">
    <property type="entry name" value="Ribosomal_S10"/>
    <property type="match status" value="1"/>
</dbReference>
<dbReference type="PRINTS" id="PR00971">
    <property type="entry name" value="RIBOSOMALS10"/>
</dbReference>
<dbReference type="SMART" id="SM01403">
    <property type="entry name" value="Ribosomal_S10"/>
    <property type="match status" value="1"/>
</dbReference>
<dbReference type="SUPFAM" id="SSF54999">
    <property type="entry name" value="Ribosomal protein S10"/>
    <property type="match status" value="1"/>
</dbReference>
<sequence>MAINNQRIRIRLKAFDHKLIDISTQEIVDTAKKTGAQVKGPIPLPVRKEKFTILISPHVNKKARDQYEIRTHKRLIDIVEPTDKTVDALMKLDLASGVDVQISLS</sequence>